<sequence>MSALQALSTSRLDGKVALVTGSGRGIGAAIATELANRGASVVVNYANSPDAAQTVVDAIKKNGGDAIALQADVSDVKQTIKLFDDAVAHYGQLDIAVSNSGVVSFGHLKDVTEEEFDRVFAINTRGQFFVAREAYKHLSVGGRIILMGSITGQAKGVPKHTVYSGTKGAIETFVRCMAIDCGDKRITVNCVAPGGIKTDMYHAVCKEYIPNGENLTNEQVDEYAATWSPLNRVGQPIDVARVCGFLASQDGEWINGKVLGIDGAACM</sequence>
<comment type="function">
    <text evidence="4 6">Reductase; part of the gene cluster that mediates the biosynthesis of elsinochromes, pigments consisting of at least four interconvertible tautomers (A, B, C and D) that have a core phenolic quinone to which various side chains are attached and which play an important role in fungal pathogenesis (PubMed:18957608). The non-reducing polyketide synthase PKS1 was proposed to iteratively catalyze decarboxylation between acetyl-CoA and malonyl-CoA subunits for polyketide chain elongation. The released polyketide undergoes cyclization to form an aromatic ring, and proceeds via serial modification steps to produce the heptaketide back- bone of elsinochrome. As elsinochrome has a symmetrical structure, two identical heptaketides are fused to form a core 1,2-dihydrobenzo-perylene ring structure, which can then be successively modified to produce the various derivatives of elsinochrome. Some of these reactions may be cooperatively carried out, at least in part, by the products of RDT1, OXR1 and PKS1. PRF1, embedded within the elsinochrome cluster possibly functions to stabilize some of the biosynthetic enzymes required for elsinochrome production. As prefoldin is a hexamer containing 2 a and 4 b subunits, additional prefoldin subunits, whose coding genes may not immediately link to the elsinochrome biosynthetic gene cluster, are required to fulfill the chaperone function. In addition, no methyltransferase-coding gene exists within the biosynthetic gene cluster, even though elsinochrome has four methyl groups at positions C3, C7, C8 and C12. Apparently, the identified gene cluster does not contain the entire entourage of genes responsible for elsinochrome biosynthesis. Once elsinochrome is synthesized, it must be exported outside the fungal cells, which is probably accomplished by the ECT1 transporter, to avoid toxicity (PubMed:21199563).</text>
</comment>
<comment type="induction">
    <text evidence="4">Expression is positively regulated by the cluster-specific transcription factor TSF1 (PubMed:18957608). Expression is induced by the presence of the cluster-specific polyketide synthase PKS1 (PubMed:18957608). Expression is up-regulated during nitrogen starvation (PubMed:18957608).</text>
</comment>
<comment type="similarity">
    <text evidence="7">Belongs to the short-chain dehydrogenases/reductases (SDR) family.</text>
</comment>
<gene>
    <name evidence="5" type="primary">RDT1</name>
</gene>
<evidence type="ECO:0000250" key="1">
    <source>
        <dbReference type="UniProtKB" id="L0E2Z4"/>
    </source>
</evidence>
<evidence type="ECO:0000250" key="2">
    <source>
        <dbReference type="UniProtKB" id="O93868"/>
    </source>
</evidence>
<evidence type="ECO:0000255" key="3">
    <source>
        <dbReference type="PROSITE-ProRule" id="PRU10001"/>
    </source>
</evidence>
<evidence type="ECO:0000269" key="4">
    <source>
    </source>
</evidence>
<evidence type="ECO:0000303" key="5">
    <source>
    </source>
</evidence>
<evidence type="ECO:0000303" key="6">
    <source>
    </source>
</evidence>
<evidence type="ECO:0000305" key="7"/>
<evidence type="ECO:0000305" key="8">
    <source>
    </source>
</evidence>
<organism>
    <name type="scientific">Elsinoe fawcettii</name>
    <name type="common">Citrus scab fungus</name>
    <name type="synonym">Sphaceloma fawcettii</name>
    <dbReference type="NCBI Taxonomy" id="40997"/>
    <lineage>
        <taxon>Eukaryota</taxon>
        <taxon>Fungi</taxon>
        <taxon>Dikarya</taxon>
        <taxon>Ascomycota</taxon>
        <taxon>Pezizomycotina</taxon>
        <taxon>Dothideomycetes</taxon>
        <taxon>Dothideomycetidae</taxon>
        <taxon>Myriangiales</taxon>
        <taxon>Elsinoaceae</taxon>
        <taxon>Elsinoe</taxon>
    </lineage>
</organism>
<name>RDT1_ELSFA</name>
<keyword id="KW-0521">NADP</keyword>
<keyword id="KW-0560">Oxidoreductase</keyword>
<protein>
    <recommendedName>
        <fullName evidence="5">Elsinochrome reductase 1</fullName>
        <ecNumber evidence="8">1.1.1.-</ecNumber>
    </recommendedName>
    <alternativeName>
        <fullName evidence="5">Elsinochromes biosynthesis cluster protein RDT1</fullName>
    </alternativeName>
</protein>
<proteinExistence type="evidence at transcript level"/>
<accession>B0ZT44</accession>
<reference key="1">
    <citation type="journal article" date="2008" name="Microbiology">
        <title>Determination of a transcriptional regulator-like gene involved in biosynthesis of elsinochrome phytotoxin by the citrus scab fungus, Elsinoe fawcettii.</title>
        <authorList>
            <person name="Chung K.R."/>
            <person name="Liao H.L."/>
        </authorList>
    </citation>
    <scope>NUCLEOTIDE SEQUENCE [GENOMIC DNA]</scope>
    <scope>IDENTIFICATION</scope>
    <scope>FUNCTION</scope>
    <scope>INDUCTION</scope>
</reference>
<reference key="2">
    <citation type="journal article" date="2011" name="Mol. Plant Pathol.">
        <title>Elsinoe fawcettii and Elsinoe australis: the fungal pathogens causing citrus scab.</title>
        <authorList>
            <person name="Chung K.R."/>
        </authorList>
    </citation>
    <scope>REVIEW</scope>
</reference>
<feature type="chain" id="PRO_0000445822" description="Elsinochrome reductase 1">
    <location>
        <begin position="1"/>
        <end position="267"/>
    </location>
</feature>
<feature type="active site" description="Proton donor" evidence="2">
    <location>
        <position position="149"/>
    </location>
</feature>
<feature type="active site" description="Proton acceptor" evidence="3">
    <location>
        <position position="163"/>
    </location>
</feature>
<feature type="active site" description="Lowers pKa of active site Tyr" evidence="2">
    <location>
        <position position="167"/>
    </location>
</feature>
<feature type="binding site" evidence="1">
    <location>
        <position position="26"/>
    </location>
    <ligand>
        <name>NADP(+)</name>
        <dbReference type="ChEBI" id="CHEBI:58349"/>
    </ligand>
</feature>
<feature type="binding site" evidence="1">
    <location>
        <position position="72"/>
    </location>
    <ligand>
        <name>NADP(+)</name>
        <dbReference type="ChEBI" id="CHEBI:58349"/>
    </ligand>
</feature>
<feature type="binding site" evidence="2">
    <location>
        <position position="99"/>
    </location>
    <ligand>
        <name>NADP(+)</name>
        <dbReference type="ChEBI" id="CHEBI:58349"/>
    </ligand>
</feature>
<feature type="binding site" evidence="1">
    <location>
        <position position="132"/>
    </location>
    <ligand>
        <name>NADP(+)</name>
        <dbReference type="ChEBI" id="CHEBI:58349"/>
    </ligand>
</feature>
<feature type="binding site" evidence="2">
    <location>
        <position position="163"/>
    </location>
    <ligand>
        <name>NADP(+)</name>
        <dbReference type="ChEBI" id="CHEBI:58349"/>
    </ligand>
</feature>
<feature type="binding site" evidence="2">
    <location>
        <position position="167"/>
    </location>
    <ligand>
        <name>NADP(+)</name>
        <dbReference type="ChEBI" id="CHEBI:58349"/>
    </ligand>
</feature>
<feature type="binding site" evidence="2">
    <location>
        <position position="196"/>
    </location>
    <ligand>
        <name>NADP(+)</name>
        <dbReference type="ChEBI" id="CHEBI:58349"/>
    </ligand>
</feature>
<feature type="binding site" evidence="1">
    <location>
        <position position="198"/>
    </location>
    <ligand>
        <name>NADP(+)</name>
        <dbReference type="ChEBI" id="CHEBI:58349"/>
    </ligand>
</feature>
<dbReference type="EC" id="1.1.1.-" evidence="8"/>
<dbReference type="EMBL" id="EU401704">
    <property type="protein sequence ID" value="ABZ01830.1"/>
    <property type="molecule type" value="Genomic_DNA"/>
</dbReference>
<dbReference type="SMR" id="B0ZT44"/>
<dbReference type="GO" id="GO:0016614">
    <property type="term" value="F:oxidoreductase activity, acting on CH-OH group of donors"/>
    <property type="evidence" value="ECO:0007669"/>
    <property type="project" value="UniProtKB-ARBA"/>
</dbReference>
<dbReference type="CDD" id="cd05362">
    <property type="entry name" value="THN_reductase-like_SDR_c"/>
    <property type="match status" value="1"/>
</dbReference>
<dbReference type="FunFam" id="3.40.50.720:FF:000084">
    <property type="entry name" value="Short-chain dehydrogenase reductase"/>
    <property type="match status" value="1"/>
</dbReference>
<dbReference type="Gene3D" id="3.40.50.720">
    <property type="entry name" value="NAD(P)-binding Rossmann-like Domain"/>
    <property type="match status" value="1"/>
</dbReference>
<dbReference type="InterPro" id="IPR036291">
    <property type="entry name" value="NAD(P)-bd_dom_sf"/>
</dbReference>
<dbReference type="InterPro" id="IPR020904">
    <property type="entry name" value="Sc_DH/Rdtase_CS"/>
</dbReference>
<dbReference type="InterPro" id="IPR002347">
    <property type="entry name" value="SDR_fam"/>
</dbReference>
<dbReference type="PANTHER" id="PTHR48107">
    <property type="entry name" value="NADPH-DEPENDENT ALDEHYDE REDUCTASE-LIKE PROTEIN, CHLOROPLASTIC-RELATED"/>
    <property type="match status" value="1"/>
</dbReference>
<dbReference type="PANTHER" id="PTHR48107:SF7">
    <property type="entry name" value="RE15974P"/>
    <property type="match status" value="1"/>
</dbReference>
<dbReference type="Pfam" id="PF13561">
    <property type="entry name" value="adh_short_C2"/>
    <property type="match status" value="1"/>
</dbReference>
<dbReference type="PRINTS" id="PR00081">
    <property type="entry name" value="GDHRDH"/>
</dbReference>
<dbReference type="PRINTS" id="PR00080">
    <property type="entry name" value="SDRFAMILY"/>
</dbReference>
<dbReference type="SUPFAM" id="SSF51735">
    <property type="entry name" value="NAD(P)-binding Rossmann-fold domains"/>
    <property type="match status" value="1"/>
</dbReference>
<dbReference type="PROSITE" id="PS00061">
    <property type="entry name" value="ADH_SHORT"/>
    <property type="match status" value="1"/>
</dbReference>